<protein>
    <recommendedName>
        <fullName>Adenylyl-sulfate kinase</fullName>
        <ecNumber>2.7.1.25</ecNumber>
    </recommendedName>
    <alternativeName>
        <fullName>APS kinase</fullName>
    </alternativeName>
    <alternativeName>
        <fullName>ATP adenosine-5'-phosphosulfate 3'-phosphotransferase</fullName>
    </alternativeName>
    <alternativeName>
        <fullName>Adenosine-5'-phosphosulfate kinase</fullName>
    </alternativeName>
</protein>
<evidence type="ECO:0000250" key="1"/>
<evidence type="ECO:0000256" key="2">
    <source>
        <dbReference type="SAM" id="MobiDB-lite"/>
    </source>
</evidence>
<evidence type="ECO:0000305" key="3"/>
<organism>
    <name type="scientific">Escherichia coli O6:H1 (strain CFT073 / ATCC 700928 / UPEC)</name>
    <dbReference type="NCBI Taxonomy" id="199310"/>
    <lineage>
        <taxon>Bacteria</taxon>
        <taxon>Pseudomonadati</taxon>
        <taxon>Pseudomonadota</taxon>
        <taxon>Gammaproteobacteria</taxon>
        <taxon>Enterobacterales</taxon>
        <taxon>Enterobacteriaceae</taxon>
        <taxon>Escherichia</taxon>
    </lineage>
</organism>
<feature type="initiator methionine" description="Removed">
    <location>
        <position position="1"/>
    </location>
</feature>
<feature type="chain" id="PRO_0000105911" description="Adenylyl-sulfate kinase">
    <location>
        <begin position="2"/>
        <end position="201"/>
    </location>
</feature>
<feature type="region of interest" description="Disordered" evidence="2">
    <location>
        <begin position="1"/>
        <end position="23"/>
    </location>
</feature>
<feature type="active site" description="Phosphoserine intermediate" evidence="1">
    <location>
        <position position="109"/>
    </location>
</feature>
<feature type="binding site" evidence="1">
    <location>
        <begin position="35"/>
        <end position="42"/>
    </location>
    <ligand>
        <name>ATP</name>
        <dbReference type="ChEBI" id="CHEBI:30616"/>
    </ligand>
</feature>
<dbReference type="EC" id="2.7.1.25"/>
<dbReference type="EMBL" id="AE014075">
    <property type="protein sequence ID" value="AAN81766.1"/>
    <property type="molecule type" value="Genomic_DNA"/>
</dbReference>
<dbReference type="RefSeq" id="WP_001173653.1">
    <property type="nucleotide sequence ID" value="NZ_CP051263.1"/>
</dbReference>
<dbReference type="SMR" id="Q8FEJ2"/>
<dbReference type="STRING" id="199310.c3317"/>
<dbReference type="KEGG" id="ecc:c3317"/>
<dbReference type="eggNOG" id="COG0529">
    <property type="taxonomic scope" value="Bacteria"/>
</dbReference>
<dbReference type="HOGENOM" id="CLU_046932_1_0_6"/>
<dbReference type="BioCyc" id="ECOL199310:C3317-MONOMER"/>
<dbReference type="UniPathway" id="UPA00140">
    <property type="reaction ID" value="UER00205"/>
</dbReference>
<dbReference type="Proteomes" id="UP000001410">
    <property type="component" value="Chromosome"/>
</dbReference>
<dbReference type="GO" id="GO:0004020">
    <property type="term" value="F:adenylylsulfate kinase activity"/>
    <property type="evidence" value="ECO:0007669"/>
    <property type="project" value="UniProtKB-UniRule"/>
</dbReference>
<dbReference type="GO" id="GO:0005524">
    <property type="term" value="F:ATP binding"/>
    <property type="evidence" value="ECO:0007669"/>
    <property type="project" value="UniProtKB-UniRule"/>
</dbReference>
<dbReference type="GO" id="GO:0070814">
    <property type="term" value="P:hydrogen sulfide biosynthetic process"/>
    <property type="evidence" value="ECO:0007669"/>
    <property type="project" value="UniProtKB-UniRule"/>
</dbReference>
<dbReference type="GO" id="GO:0000103">
    <property type="term" value="P:sulfate assimilation"/>
    <property type="evidence" value="ECO:0007669"/>
    <property type="project" value="UniProtKB-UniRule"/>
</dbReference>
<dbReference type="CDD" id="cd02027">
    <property type="entry name" value="APSK"/>
    <property type="match status" value="1"/>
</dbReference>
<dbReference type="FunFam" id="3.40.50.300:FF:000212">
    <property type="entry name" value="Adenylyl-sulfate kinase"/>
    <property type="match status" value="1"/>
</dbReference>
<dbReference type="Gene3D" id="3.40.50.300">
    <property type="entry name" value="P-loop containing nucleotide triphosphate hydrolases"/>
    <property type="match status" value="1"/>
</dbReference>
<dbReference type="HAMAP" id="MF_00065">
    <property type="entry name" value="Adenylyl_sulf_kinase"/>
    <property type="match status" value="1"/>
</dbReference>
<dbReference type="InterPro" id="IPR002891">
    <property type="entry name" value="APS_kinase"/>
</dbReference>
<dbReference type="InterPro" id="IPR027417">
    <property type="entry name" value="P-loop_NTPase"/>
</dbReference>
<dbReference type="NCBIfam" id="TIGR00455">
    <property type="entry name" value="apsK"/>
    <property type="match status" value="1"/>
</dbReference>
<dbReference type="NCBIfam" id="NF003013">
    <property type="entry name" value="PRK03846.1"/>
    <property type="match status" value="1"/>
</dbReference>
<dbReference type="PANTHER" id="PTHR11055:SF63">
    <property type="entry name" value="ADENYLYL-SULFATE KINASE 1, CHLOROPLASTIC"/>
    <property type="match status" value="1"/>
</dbReference>
<dbReference type="PANTHER" id="PTHR11055">
    <property type="entry name" value="BIFUNCTIONAL 3'-PHOSPHOADENOSINE 5'-PHOSPHOSULFATE SYNTHASE"/>
    <property type="match status" value="1"/>
</dbReference>
<dbReference type="Pfam" id="PF01583">
    <property type="entry name" value="APS_kinase"/>
    <property type="match status" value="1"/>
</dbReference>
<dbReference type="SUPFAM" id="SSF52540">
    <property type="entry name" value="P-loop containing nucleoside triphosphate hydrolases"/>
    <property type="match status" value="1"/>
</dbReference>
<proteinExistence type="inferred from homology"/>
<accession>Q8FEJ2</accession>
<gene>
    <name type="primary">cysC</name>
    <name type="ordered locus">c3317</name>
</gene>
<keyword id="KW-0067">ATP-binding</keyword>
<keyword id="KW-0418">Kinase</keyword>
<keyword id="KW-0547">Nucleotide-binding</keyword>
<keyword id="KW-0597">Phosphoprotein</keyword>
<keyword id="KW-1185">Reference proteome</keyword>
<keyword id="KW-0808">Transferase</keyword>
<name>CYSC_ECOL6</name>
<reference key="1">
    <citation type="journal article" date="2002" name="Proc. Natl. Acad. Sci. U.S.A.">
        <title>Extensive mosaic structure revealed by the complete genome sequence of uropathogenic Escherichia coli.</title>
        <authorList>
            <person name="Welch R.A."/>
            <person name="Burland V."/>
            <person name="Plunkett G. III"/>
            <person name="Redford P."/>
            <person name="Roesch P."/>
            <person name="Rasko D."/>
            <person name="Buckles E.L."/>
            <person name="Liou S.-R."/>
            <person name="Boutin A."/>
            <person name="Hackett J."/>
            <person name="Stroud D."/>
            <person name="Mayhew G.F."/>
            <person name="Rose D.J."/>
            <person name="Zhou S."/>
            <person name="Schwartz D.C."/>
            <person name="Perna N.T."/>
            <person name="Mobley H.L.T."/>
            <person name="Donnenberg M.S."/>
            <person name="Blattner F.R."/>
        </authorList>
    </citation>
    <scope>NUCLEOTIDE SEQUENCE [LARGE SCALE GENOMIC DNA]</scope>
    <source>
        <strain>CFT073 / ATCC 700928 / UPEC</strain>
    </source>
</reference>
<sequence>MALHDENVVWHSHPVTPQQREQHHGHRGVVLWFTGLSGSGKSTVAGALEEALHKLGVSTYLLDGDNVRHGLCSDLGFSDADRKENIRRVGEVANLMVEAGLVVLTAFISPHRAERQMVRERVGEGRFIEVFVDTPLAICEARDPKGLYKKARAGELRNFTGIDSVYEAPESAEIHLNGEQLVTNLVQQLLDLLRQNDIIRS</sequence>
<comment type="function">
    <text evidence="1">Catalyzes the synthesis of activated sulfate.</text>
</comment>
<comment type="catalytic activity">
    <reaction>
        <text>adenosine 5'-phosphosulfate + ATP = 3'-phosphoadenylyl sulfate + ADP + H(+)</text>
        <dbReference type="Rhea" id="RHEA:24152"/>
        <dbReference type="ChEBI" id="CHEBI:15378"/>
        <dbReference type="ChEBI" id="CHEBI:30616"/>
        <dbReference type="ChEBI" id="CHEBI:58243"/>
        <dbReference type="ChEBI" id="CHEBI:58339"/>
        <dbReference type="ChEBI" id="CHEBI:456216"/>
        <dbReference type="EC" id="2.7.1.25"/>
    </reaction>
</comment>
<comment type="pathway">
    <text>Sulfur metabolism; hydrogen sulfide biosynthesis; sulfite from sulfate: step 2/3.</text>
</comment>
<comment type="similarity">
    <text evidence="3">Belongs to the APS kinase family.</text>
</comment>